<accession>P11657</accession>
<reference key="1">
    <citation type="journal article" date="1989" name="Mol. Microbiol.">
        <title>Molecular characterization of a surface protein antigen gene from serotype c Streptococcus mutans, implicated in dental caries.</title>
        <authorList>
            <person name="Okahashi N."/>
            <person name="Sasakawa C."/>
            <person name="Yoshikawa M."/>
            <person name="Hamada S."/>
            <person name="Koga T."/>
        </authorList>
    </citation>
    <scope>NUCLEOTIDE SEQUENCE [GENOMIC DNA]</scope>
    <scope>PROTEIN SEQUENCE OF 39-48</scope>
    <source>
        <strain>MT8148 / Serotype c</strain>
    </source>
</reference>
<reference key="2">
    <citation type="submission" date="2000-03" db="EMBL/GenBank/DDBJ databases">
        <title>Identification of Streptococcus mutans rgtB gene as a regulator of glucosyltransferase expression.</title>
        <authorList>
            <person name="Terao Y."/>
            <person name="Kawabata S."/>
            <person name="Hamada S."/>
        </authorList>
    </citation>
    <scope>NUCLEOTIDE SEQUENCE [GENOMIC DNA]</scope>
    <source>
        <strain>MT8148 / Serotype c</strain>
    </source>
</reference>
<reference key="3">
    <citation type="journal article" date="2002" name="J. Mol. Biol.">
        <title>Crystal structure of the V-region of Streptococcus mutans antigen I/II at 2.4 A resolution suggests a sugar preformed binding site.</title>
        <authorList>
            <person name="Troffer-Charlier N."/>
            <person name="Ogier J."/>
            <person name="Moras D."/>
            <person name="Cavarelli J."/>
        </authorList>
    </citation>
    <scope>X-RAY CRYSTALLOGRAPHY (2.4 ANGSTROMS) OF 463-839</scope>
    <source>
        <strain>OMZ175 / Serotype f</strain>
    </source>
</reference>
<keyword id="KW-0002">3D-structure</keyword>
<keyword id="KW-0134">Cell wall</keyword>
<keyword id="KW-0214">Dental caries</keyword>
<keyword id="KW-0903">Direct protein sequencing</keyword>
<keyword id="KW-0572">Peptidoglycan-anchor</keyword>
<keyword id="KW-0677">Repeat</keyword>
<keyword id="KW-0964">Secreted</keyword>
<keyword id="KW-0732">Signal</keyword>
<comment type="function">
    <text>Surface protein antigen implicated in dental caries.</text>
</comment>
<comment type="subcellular location">
    <subcellularLocation>
        <location evidence="1">Secreted</location>
        <location evidence="1">Cell wall</location>
        <topology evidence="1">Peptidoglycan-anchor</topology>
    </subcellularLocation>
</comment>
<comment type="similarity">
    <text evidence="6">Belongs to the antigen I/II family.</text>
</comment>
<feature type="signal peptide" evidence="4">
    <location>
        <begin position="1"/>
        <end position="38"/>
    </location>
</feature>
<feature type="chain" id="PRO_0000005645" description="Major cell-surface adhesin PAc">
    <location>
        <begin position="39"/>
        <end position="1535"/>
    </location>
</feature>
<feature type="propeptide" id="PRO_0000005646" description="Removed by sortase" evidence="1">
    <location>
        <begin position="1536"/>
        <end position="1565"/>
    </location>
</feature>
<feature type="repeat" description="Ag I/II A 1" evidence="2">
    <location>
        <begin position="146"/>
        <end position="220"/>
    </location>
</feature>
<feature type="repeat" description="Ag I/II A 2" evidence="2">
    <location>
        <begin position="221"/>
        <end position="302"/>
    </location>
</feature>
<feature type="repeat" description="Ag I/II A 3" evidence="2">
    <location>
        <begin position="303"/>
        <end position="384"/>
    </location>
</feature>
<feature type="repeat" description="Ag I/II A 4" evidence="2">
    <location>
        <begin position="385"/>
        <end position="466"/>
    </location>
</feature>
<feature type="repeat" description="P1">
    <location>
        <begin position="848"/>
        <end position="887"/>
    </location>
</feature>
<feature type="repeat" description="P2">
    <location>
        <begin position="888"/>
        <end position="926"/>
    </location>
</feature>
<feature type="repeat" description="P3">
    <location>
        <begin position="927"/>
        <end position="964"/>
    </location>
</feature>
<feature type="region of interest" description="Disordered" evidence="3">
    <location>
        <begin position="42"/>
        <end position="81"/>
    </location>
</feature>
<feature type="region of interest" description="Heptad repeats of Y-[EQ]-X-X-L-A-X">
    <location>
        <begin position="203"/>
        <end position="448"/>
    </location>
</feature>
<feature type="region of interest" description="V-region (lectin-like)">
    <location>
        <begin position="461"/>
        <end position="834"/>
    </location>
</feature>
<feature type="region of interest" description="Disordered" evidence="3">
    <location>
        <begin position="827"/>
        <end position="985"/>
    </location>
</feature>
<feature type="region of interest" description="Disordered" evidence="3">
    <location>
        <begin position="1486"/>
        <end position="1511"/>
    </location>
</feature>
<feature type="short sequence motif" description="LPXTG sorting signal" evidence="1">
    <location>
        <begin position="1532"/>
        <end position="1536"/>
    </location>
</feature>
<feature type="compositionally biased region" description="Low complexity" evidence="3">
    <location>
        <begin position="42"/>
        <end position="54"/>
    </location>
</feature>
<feature type="compositionally biased region" description="Basic and acidic residues" evidence="3">
    <location>
        <begin position="72"/>
        <end position="81"/>
    </location>
</feature>
<feature type="compositionally biased region" description="Pro residues" evidence="3">
    <location>
        <begin position="946"/>
        <end position="961"/>
    </location>
</feature>
<feature type="modified residue" description="Pentaglycyl murein peptidoglycan amidated threonine" evidence="1">
    <location>
        <position position="1535"/>
    </location>
</feature>
<feature type="helix" evidence="10">
    <location>
        <begin position="446"/>
        <end position="454"/>
    </location>
</feature>
<feature type="helix" evidence="10">
    <location>
        <begin position="458"/>
        <end position="490"/>
    </location>
</feature>
<feature type="helix" evidence="10">
    <location>
        <begin position="491"/>
        <end position="493"/>
    </location>
</feature>
<feature type="strand" evidence="10">
    <location>
        <begin position="499"/>
        <end position="502"/>
    </location>
</feature>
<feature type="strand" evidence="10">
    <location>
        <begin position="517"/>
        <end position="527"/>
    </location>
</feature>
<feature type="helix" evidence="10">
    <location>
        <begin position="529"/>
        <end position="536"/>
    </location>
</feature>
<feature type="helix" evidence="10">
    <location>
        <begin position="539"/>
        <end position="541"/>
    </location>
</feature>
<feature type="helix" evidence="10">
    <location>
        <begin position="542"/>
        <end position="545"/>
    </location>
</feature>
<feature type="turn" evidence="10">
    <location>
        <begin position="546"/>
        <end position="548"/>
    </location>
</feature>
<feature type="helix" evidence="10">
    <location>
        <begin position="552"/>
        <end position="554"/>
    </location>
</feature>
<feature type="helix" evidence="10">
    <location>
        <begin position="557"/>
        <end position="560"/>
    </location>
</feature>
<feature type="helix" evidence="10">
    <location>
        <begin position="563"/>
        <end position="565"/>
    </location>
</feature>
<feature type="strand" evidence="10">
    <location>
        <begin position="566"/>
        <end position="569"/>
    </location>
</feature>
<feature type="strand" evidence="10">
    <location>
        <begin position="572"/>
        <end position="576"/>
    </location>
</feature>
<feature type="helix" evidence="10">
    <location>
        <begin position="577"/>
        <end position="579"/>
    </location>
</feature>
<feature type="turn" evidence="10">
    <location>
        <begin position="585"/>
        <end position="587"/>
    </location>
</feature>
<feature type="strand" evidence="10">
    <location>
        <begin position="593"/>
        <end position="599"/>
    </location>
</feature>
<feature type="strand" evidence="10">
    <location>
        <begin position="604"/>
        <end position="610"/>
    </location>
</feature>
<feature type="strand" evidence="10">
    <location>
        <begin position="624"/>
        <end position="631"/>
    </location>
</feature>
<feature type="strand" evidence="10">
    <location>
        <begin position="638"/>
        <end position="640"/>
    </location>
</feature>
<feature type="strand" evidence="10">
    <location>
        <begin position="642"/>
        <end position="649"/>
    </location>
</feature>
<feature type="helix" evidence="10">
    <location>
        <begin position="650"/>
        <end position="652"/>
    </location>
</feature>
<feature type="strand" evidence="10">
    <location>
        <begin position="654"/>
        <end position="657"/>
    </location>
</feature>
<feature type="strand" evidence="7">
    <location>
        <begin position="664"/>
        <end position="666"/>
    </location>
</feature>
<feature type="strand" evidence="10">
    <location>
        <begin position="668"/>
        <end position="678"/>
    </location>
</feature>
<feature type="strand" evidence="10">
    <location>
        <begin position="687"/>
        <end position="694"/>
    </location>
</feature>
<feature type="strand" evidence="10">
    <location>
        <begin position="703"/>
        <end position="709"/>
    </location>
</feature>
<feature type="strand" evidence="10">
    <location>
        <begin position="711"/>
        <end position="715"/>
    </location>
</feature>
<feature type="strand" evidence="10">
    <location>
        <begin position="721"/>
        <end position="725"/>
    </location>
</feature>
<feature type="strand" evidence="10">
    <location>
        <begin position="728"/>
        <end position="731"/>
    </location>
</feature>
<feature type="helix" evidence="11">
    <location>
        <begin position="741"/>
        <end position="743"/>
    </location>
</feature>
<feature type="strand" evidence="10">
    <location>
        <begin position="751"/>
        <end position="753"/>
    </location>
</feature>
<feature type="strand" evidence="10">
    <location>
        <begin position="759"/>
        <end position="762"/>
    </location>
</feature>
<feature type="helix" evidence="10">
    <location>
        <begin position="766"/>
        <end position="769"/>
    </location>
</feature>
<feature type="strand" evidence="10">
    <location>
        <begin position="771"/>
        <end position="778"/>
    </location>
</feature>
<feature type="strand" evidence="10">
    <location>
        <begin position="780"/>
        <end position="788"/>
    </location>
</feature>
<feature type="helix" evidence="10">
    <location>
        <begin position="789"/>
        <end position="791"/>
    </location>
</feature>
<feature type="helix" evidence="10">
    <location>
        <begin position="795"/>
        <end position="797"/>
    </location>
</feature>
<feature type="strand" evidence="10">
    <location>
        <begin position="812"/>
        <end position="816"/>
    </location>
</feature>
<feature type="strand" evidence="10">
    <location>
        <begin position="818"/>
        <end position="820"/>
    </location>
</feature>
<feature type="strand" evidence="7">
    <location>
        <begin position="824"/>
        <end position="826"/>
    </location>
</feature>
<feature type="strand" evidence="9">
    <location>
        <begin position="1003"/>
        <end position="1009"/>
    </location>
</feature>
<feature type="strand" evidence="9">
    <location>
        <begin position="1025"/>
        <end position="1032"/>
    </location>
</feature>
<feature type="strand" evidence="9">
    <location>
        <begin position="1045"/>
        <end position="1050"/>
    </location>
</feature>
<feature type="strand" evidence="9">
    <location>
        <begin position="1055"/>
        <end position="1057"/>
    </location>
</feature>
<feature type="helix" evidence="9">
    <location>
        <begin position="1059"/>
        <end position="1064"/>
    </location>
</feature>
<feature type="strand" evidence="9">
    <location>
        <begin position="1069"/>
        <end position="1074"/>
    </location>
</feature>
<feature type="helix" evidence="9">
    <location>
        <begin position="1075"/>
        <end position="1077"/>
    </location>
</feature>
<feature type="strand" evidence="9">
    <location>
        <begin position="1079"/>
        <end position="1084"/>
    </location>
</feature>
<feature type="helix" evidence="9">
    <location>
        <begin position="1086"/>
        <end position="1093"/>
    </location>
</feature>
<feature type="turn" evidence="9">
    <location>
        <begin position="1094"/>
        <end position="1097"/>
    </location>
</feature>
<feature type="strand" evidence="9">
    <location>
        <begin position="1106"/>
        <end position="1111"/>
    </location>
</feature>
<feature type="strand" evidence="9">
    <location>
        <begin position="1117"/>
        <end position="1120"/>
    </location>
</feature>
<feature type="strand" evidence="9">
    <location>
        <begin position="1123"/>
        <end position="1126"/>
    </location>
</feature>
<feature type="turn" evidence="9">
    <location>
        <begin position="1127"/>
        <end position="1129"/>
    </location>
</feature>
<feature type="strand" evidence="9">
    <location>
        <begin position="1130"/>
        <end position="1133"/>
    </location>
</feature>
<feature type="strand" evidence="9">
    <location>
        <begin position="1137"/>
        <end position="1140"/>
    </location>
</feature>
<feature type="strand" evidence="8">
    <location>
        <begin position="1159"/>
        <end position="1161"/>
    </location>
</feature>
<feature type="strand" evidence="8">
    <location>
        <begin position="1180"/>
        <end position="1187"/>
    </location>
</feature>
<feature type="helix" evidence="8">
    <location>
        <begin position="1190"/>
        <end position="1192"/>
    </location>
</feature>
<feature type="helix" evidence="8">
    <location>
        <begin position="1199"/>
        <end position="1202"/>
    </location>
</feature>
<feature type="strand" evidence="8">
    <location>
        <begin position="1206"/>
        <end position="1211"/>
    </location>
</feature>
<feature type="turn" evidence="8">
    <location>
        <begin position="1214"/>
        <end position="1216"/>
    </location>
</feature>
<feature type="strand" evidence="8">
    <location>
        <begin position="1217"/>
        <end position="1219"/>
    </location>
</feature>
<feature type="helix" evidence="8">
    <location>
        <begin position="1221"/>
        <end position="1223"/>
    </location>
</feature>
<feature type="strand" evidence="8">
    <location>
        <begin position="1225"/>
        <end position="1228"/>
    </location>
</feature>
<feature type="strand" evidence="8">
    <location>
        <begin position="1236"/>
        <end position="1244"/>
    </location>
</feature>
<feature type="turn" evidence="8">
    <location>
        <begin position="1245"/>
        <end position="1247"/>
    </location>
</feature>
<feature type="helix" evidence="8">
    <location>
        <begin position="1250"/>
        <end position="1258"/>
    </location>
</feature>
<feature type="strand" evidence="8">
    <location>
        <begin position="1267"/>
        <end position="1273"/>
    </location>
</feature>
<feature type="helix" evidence="8">
    <location>
        <begin position="1275"/>
        <end position="1282"/>
    </location>
</feature>
<feature type="turn" evidence="8">
    <location>
        <begin position="1283"/>
        <end position="1286"/>
    </location>
</feature>
<feature type="strand" evidence="8">
    <location>
        <begin position="1289"/>
        <end position="1297"/>
    </location>
</feature>
<feature type="helix" evidence="8">
    <location>
        <begin position="1299"/>
        <end position="1304"/>
    </location>
</feature>
<feature type="strand" evidence="8">
    <location>
        <begin position="1306"/>
        <end position="1316"/>
    </location>
</feature>
<feature type="strand" evidence="8">
    <location>
        <begin position="1319"/>
        <end position="1330"/>
    </location>
</feature>
<feature type="strand" evidence="8">
    <location>
        <begin position="1336"/>
        <end position="1342"/>
    </location>
</feature>
<feature type="strand" evidence="8">
    <location>
        <begin position="1361"/>
        <end position="1367"/>
    </location>
</feature>
<feature type="strand" evidence="8">
    <location>
        <begin position="1373"/>
        <end position="1377"/>
    </location>
</feature>
<feature type="strand" evidence="8">
    <location>
        <begin position="1382"/>
        <end position="1387"/>
    </location>
</feature>
<feature type="turn" evidence="8">
    <location>
        <begin position="1390"/>
        <end position="1392"/>
    </location>
</feature>
<feature type="strand" evidence="8">
    <location>
        <begin position="1393"/>
        <end position="1405"/>
    </location>
</feature>
<feature type="strand" evidence="8">
    <location>
        <begin position="1407"/>
        <end position="1409"/>
    </location>
</feature>
<feature type="helix" evidence="8">
    <location>
        <begin position="1422"/>
        <end position="1424"/>
    </location>
</feature>
<feature type="strand" evidence="8">
    <location>
        <begin position="1425"/>
        <end position="1430"/>
    </location>
</feature>
<feature type="turn" evidence="8">
    <location>
        <begin position="1431"/>
        <end position="1434"/>
    </location>
</feature>
<feature type="strand" evidence="8">
    <location>
        <begin position="1435"/>
        <end position="1440"/>
    </location>
</feature>
<feature type="helix" evidence="8">
    <location>
        <begin position="1442"/>
        <end position="1447"/>
    </location>
</feature>
<feature type="strand" evidence="8">
    <location>
        <begin position="1456"/>
        <end position="1464"/>
    </location>
</feature>
<feature type="strand" evidence="8">
    <location>
        <begin position="1466"/>
        <end position="1472"/>
    </location>
</feature>
<feature type="strand" evidence="8">
    <location>
        <begin position="1474"/>
        <end position="1478"/>
    </location>
</feature>
<feature type="strand" evidence="8">
    <location>
        <begin position="1481"/>
        <end position="1484"/>
    </location>
</feature>
<feature type="strand" evidence="8">
    <location>
        <begin position="1488"/>
        <end position="1492"/>
    </location>
</feature>
<organism>
    <name type="scientific">Streptococcus mutans</name>
    <dbReference type="NCBI Taxonomy" id="1309"/>
    <lineage>
        <taxon>Bacteria</taxon>
        <taxon>Bacillati</taxon>
        <taxon>Bacillota</taxon>
        <taxon>Bacilli</taxon>
        <taxon>Lactobacillales</taxon>
        <taxon>Streptococcaceae</taxon>
        <taxon>Streptococcus</taxon>
    </lineage>
</organism>
<evidence type="ECO:0000255" key="1">
    <source>
        <dbReference type="PROSITE-ProRule" id="PRU00477"/>
    </source>
</evidence>
<evidence type="ECO:0000255" key="2">
    <source>
        <dbReference type="PROSITE-ProRule" id="PRU01310"/>
    </source>
</evidence>
<evidence type="ECO:0000256" key="3">
    <source>
        <dbReference type="SAM" id="MobiDB-lite"/>
    </source>
</evidence>
<evidence type="ECO:0000269" key="4">
    <source>
    </source>
</evidence>
<evidence type="ECO:0000303" key="5">
    <source>
    </source>
</evidence>
<evidence type="ECO:0000305" key="6"/>
<evidence type="ECO:0007829" key="7">
    <source>
        <dbReference type="PDB" id="1JMM"/>
    </source>
</evidence>
<evidence type="ECO:0007829" key="8">
    <source>
        <dbReference type="PDB" id="3OPU"/>
    </source>
</evidence>
<evidence type="ECO:0007829" key="9">
    <source>
        <dbReference type="PDB" id="3QE5"/>
    </source>
</evidence>
<evidence type="ECO:0007829" key="10">
    <source>
        <dbReference type="PDB" id="6TZL"/>
    </source>
</evidence>
<evidence type="ECO:0007829" key="11">
    <source>
        <dbReference type="PDB" id="6UBV"/>
    </source>
</evidence>
<dbReference type="EMBL" id="X14490">
    <property type="protein sequence ID" value="CAA32652.1"/>
    <property type="molecule type" value="Genomic_DNA"/>
</dbReference>
<dbReference type="EMBL" id="AB040534">
    <property type="protein sequence ID" value="BAC54564.1"/>
    <property type="molecule type" value="Genomic_DNA"/>
</dbReference>
<dbReference type="PIR" id="S04729">
    <property type="entry name" value="S04729"/>
</dbReference>
<dbReference type="PDB" id="1JMM">
    <property type="method" value="X-ray"/>
    <property type="resolution" value="2.40 A"/>
    <property type="chains" value="A=463-839"/>
</dbReference>
<dbReference type="PDB" id="3OPU">
    <property type="method" value="X-ray"/>
    <property type="resolution" value="2.18 A"/>
    <property type="chains" value="A/B/C/D/E/F=1154-1492"/>
</dbReference>
<dbReference type="PDB" id="3QE5">
    <property type="method" value="X-ray"/>
    <property type="resolution" value="2.50 A"/>
    <property type="chains" value="A/B=991-1485"/>
</dbReference>
<dbReference type="PDB" id="6TZL">
    <property type="method" value="X-ray"/>
    <property type="resolution" value="1.60 A"/>
    <property type="chains" value="A/B/C/D=446-848"/>
</dbReference>
<dbReference type="PDB" id="6UBV">
    <property type="method" value="X-ray"/>
    <property type="resolution" value="2.70 A"/>
    <property type="chains" value="A/B/C/D=446-848"/>
</dbReference>
<dbReference type="PDBsum" id="1JMM"/>
<dbReference type="PDBsum" id="3OPU"/>
<dbReference type="PDBsum" id="3QE5"/>
<dbReference type="PDBsum" id="6TZL"/>
<dbReference type="PDBsum" id="6UBV"/>
<dbReference type="BMRB" id="P11657"/>
<dbReference type="SMR" id="P11657"/>
<dbReference type="eggNOG" id="COG3064">
    <property type="taxonomic scope" value="Bacteria"/>
</dbReference>
<dbReference type="eggNOG" id="COG3087">
    <property type="taxonomic scope" value="Bacteria"/>
</dbReference>
<dbReference type="EvolutionaryTrace" id="P11657"/>
<dbReference type="GO" id="GO:0005576">
    <property type="term" value="C:extracellular region"/>
    <property type="evidence" value="ECO:0007669"/>
    <property type="project" value="UniProtKB-KW"/>
</dbReference>
<dbReference type="FunFam" id="2.60.40.740:FF:000001">
    <property type="entry name" value="Major cell-surface adhesin PAc"/>
    <property type="match status" value="1"/>
</dbReference>
<dbReference type="FunFam" id="2.60.530.10:FF:000001">
    <property type="entry name" value="Surface protein adhesin"/>
    <property type="match status" value="1"/>
</dbReference>
<dbReference type="Gene3D" id="2.60.40.740">
    <property type="match status" value="3"/>
</dbReference>
<dbReference type="Gene3D" id="6.10.250.2200">
    <property type="match status" value="4"/>
</dbReference>
<dbReference type="Gene3D" id="2.60.530.10">
    <property type="entry name" value="Major cell-surface adhesin PAc"/>
    <property type="match status" value="1"/>
</dbReference>
<dbReference type="InterPro" id="IPR026345">
    <property type="entry name" value="Adh_isopep-form_adh_dom"/>
</dbReference>
<dbReference type="InterPro" id="IPR041324">
    <property type="entry name" value="AgI/II_N"/>
</dbReference>
<dbReference type="InterPro" id="IPR032300">
    <property type="entry name" value="Antigen_C"/>
</dbReference>
<dbReference type="InterPro" id="IPR021197">
    <property type="entry name" value="Cross-wall-target_lipo_motif"/>
</dbReference>
<dbReference type="InterPro" id="IPR013574">
    <property type="entry name" value="Glucan-bd_C/Surface_Ag-I/II_V"/>
</dbReference>
<dbReference type="InterPro" id="IPR019931">
    <property type="entry name" value="LPXTG_anchor"/>
</dbReference>
<dbReference type="InterPro" id="IPR036234">
    <property type="entry name" value="SA_I/II_PAC_V_sf"/>
</dbReference>
<dbReference type="InterPro" id="IPR009578">
    <property type="entry name" value="Surface_Ag_I_II_A_rpt"/>
</dbReference>
<dbReference type="NCBIfam" id="TIGR04228">
    <property type="entry name" value="isopep_sspB_C2"/>
    <property type="match status" value="1"/>
</dbReference>
<dbReference type="NCBIfam" id="TIGR01167">
    <property type="entry name" value="LPXTG_anchor"/>
    <property type="match status" value="1"/>
</dbReference>
<dbReference type="NCBIfam" id="NF033804">
    <property type="entry name" value="Streccoc_I_II"/>
    <property type="match status" value="1"/>
</dbReference>
<dbReference type="NCBIfam" id="TIGR03726">
    <property type="entry name" value="strep_RK_lipo"/>
    <property type="match status" value="1"/>
</dbReference>
<dbReference type="Pfam" id="PF18652">
    <property type="entry name" value="Adhesin_P1_N"/>
    <property type="match status" value="1"/>
</dbReference>
<dbReference type="Pfam" id="PF17998">
    <property type="entry name" value="AgI_II_C2"/>
    <property type="match status" value="1"/>
</dbReference>
<dbReference type="Pfam" id="PF16364">
    <property type="entry name" value="Antigen_C"/>
    <property type="match status" value="1"/>
</dbReference>
<dbReference type="Pfam" id="PF08363">
    <property type="entry name" value="GbpC"/>
    <property type="match status" value="1"/>
</dbReference>
<dbReference type="Pfam" id="PF00746">
    <property type="entry name" value="Gram_pos_anchor"/>
    <property type="match status" value="1"/>
</dbReference>
<dbReference type="Pfam" id="PF06696">
    <property type="entry name" value="Strep_SA_rep"/>
    <property type="match status" value="7"/>
</dbReference>
<dbReference type="PRINTS" id="PR01217">
    <property type="entry name" value="PRICHEXTENSN"/>
</dbReference>
<dbReference type="SUPFAM" id="SSF74914">
    <property type="entry name" value="V-region of surface antigen I/II (SA I/II, PAC)"/>
    <property type="match status" value="1"/>
</dbReference>
<dbReference type="PROSITE" id="PS51965">
    <property type="entry name" value="AG_I_II_AR"/>
    <property type="match status" value="4"/>
</dbReference>
<dbReference type="PROSITE" id="PS50847">
    <property type="entry name" value="GRAM_POS_ANCHORING"/>
    <property type="match status" value="1"/>
</dbReference>
<proteinExistence type="evidence at protein level"/>
<protein>
    <recommendedName>
        <fullName evidence="5">Major cell-surface adhesin PAc</fullName>
    </recommendedName>
    <alternativeName>
        <fullName>Antigen I/II</fullName>
    </alternativeName>
</protein>
<gene>
    <name evidence="5" type="primary">pac</name>
</gene>
<sequence>MKVKKTYGFRKSKISKTLCGAVLGTVAAVSVAGQKVFADETTTTSDVDTKVVGTQTGNPATNLPEAQGSASKEAEQSQTKLERQMVHTIEVPKTDLDQAAKDAKSAGVNVVQDADVNKGTVKTPEEAVQKETEIKEDYTKQAEDIKKTTDQYKSDVAAHEAEVAKIKAKNQATKEQYEKDMAAHKAEVERINAANAASKTAYEAKLAQYQADLAAVQKTNAANQAAYQKALAAYQAELKRVQEANAAAKAAYDTAVAANNAKNTEIAAANEEIRKRNATAKAEYETKLAQYQAELKRVQEANAANEADYQAKLTAYQTELARVQKANADAKATYEAAVAANNAKNAALTAENTAIKQRNENAKATYEAALKQYEADLAAVKKANAANEADYQAKLTAYQTELARVQKANADAKAAYEAAVAANNAANAALTAENTAIKKRNADAKADYEAKLAKYQADLAKYQKDLADYPVKLKAYEDEQTSIKAALAELEKHKNEDGNLTEPSAQNLVYDLEPNANLSLTTDGKFLKASAVDDAFSKSTSKAKYDQKILQLDDLDITNLEQSNDVASSMELYGNFGDKAGWSTTVSNNSQVKWGSVLLERGQSATATYTNLQNSYYNGKKISKIVYKYTVDPKSKFQGQKVWLGIFTDPTLGVFASAYTGQVEKNTSIFIKNEFTFYHEDEKPINFDNALLSVTSLNREHNSIEMAKDYSGKFVKISGSSIGEKNGMIYATDTLNFKQGEGGSRWTMYKNSQAGSGWDSSDAPNSWYGAGAIKMSGPNNHVTVGATSATNVMPVSDMPVVPGKDNTDGKKPNIWYSLNGKIRAVNVPKVTKEKPTPPVKPTAPTKPTYETEKPLKPAPVAPNYEKEPTPPTRTPDQAEPNKPTPPTYETEKPLEPAPVEPSYEAEPTPPTRTPDQAEPNKPTPPTYETEKPLEPAPVEPSYEAEPTPPTPTPDQPEPNKPVEPTYEVIPTPPTDPVYQDLPTPPSDPTVHFHYFKLAVQPQVNKEIRNNNDINIDRTLVAKQSVVKFQLKTADLPAGRDETTSFVLVDPLPSGYQFNPEATKAASPGFDVTYDNATNTVTFKATAATLATFNADLTKSVATIYPTVVGQVLNDGATYKNNFTLTVNDAYGIKSNVVRVTTPGKPNDPDNPNNNYIKPTKVNKNENGVVIDGKTVLAGSTNYYELTWDLDQYKNDRSSADTIQKGFYYVDDYPEEALELRQDLVKITDANGNEVTGVSVDNYTNLEAAPQEIRDVLSKAGIRPKGAFQIFRADNPREFYDTYVKTGIDLKIVSPMVVKKQMGQTGGSYENQAYQIDFGNGYASNIVINNVPKINPKKDVTLTLDPADTNNVDGQTIPLNTVFNYRLIGGIIPANHSEELFEYNFYDDYDQTGDHYTGQYKVFAKVDITLKNGVIIKSGTELTQYTTAEVDTTKGAITIKFKEAFLRSVSIDSAFQAESYIQMKRIAVGTFENTYINTVNGVTYSSNTVKTTTPEDPADPTDPQDPSSPRTSTVIIYKPQSTAYQPSSVQETLPNTGVTNNAYMPLLGIIGLVTSFSLLGLKAKKD</sequence>
<name>PAC_STRMG</name>